<comment type="function">
    <molecule>Ubiquitin</molecule>
    <text evidence="2 4">Exists either covalently attached to another protein, or free (unanchored) (By similarity). When covalently bound, it is conjugated to target proteins via an isopeptide bond either as a monomer (monoubiquitin), a polymer linked via different Lys residues of the ubiquitin (polyubiquitin chains) or a linear polymer linked via the initiator Met of the ubiquitin (linear polyubiquitin chains) (PubMed:26116755). Polyubiquitin chains, when attached to a target protein, have different functions depending on the Lys residue of the ubiquitin that is linked: Lys-6-linked may be involved in DNA repair; Lys-11-linked is involved in ERAD (endoplasmic reticulum-associated degradation) and in cell-cycle regulation; Lys-29-linked is involved in proteotoxic stress response and cell cycle; Lys-33-linked is involved in kinase modification; Lys-48-linked is involved in protein degradation via the proteasome; Lys-63-linked is involved in endocytosis, DNA-damage responses as well as in signaling processes leading to activation of the transcription factor NF-kappa-B (By similarity). Linear polymer chains formed via attachment by the initiator Met lead to cell signaling (By similarity). Ubiquitin is usually conjugated to Lys residues of target proteins, however, in rare cases, conjugation to Cys or Ser residues has been observed (By similarity). When polyubiquitin is free (unanchored-polyubiquitin), it also has distinct roles, such as in activation of protein kinases, and in signaling (By similarity).</text>
</comment>
<comment type="subunit">
    <text evidence="2">Interacts with SKP1-KMD2A and SKP1-KMD2B complexes.</text>
</comment>
<comment type="interaction">
    <interactant intactId="EBI-5333021">
        <id>P0CG53</id>
    </interactant>
    <interactant intactId="EBI-740220">
        <id>O14964</id>
        <label>HGS</label>
    </interactant>
    <organismsDiffer>true</organismsDiffer>
    <experiments>7</experiments>
</comment>
<comment type="interaction">
    <interactant intactId="EBI-5333021">
        <id>P0CG53</id>
    </interactant>
    <interactant intactId="EBI-1382">
        <id>P38753</id>
        <label>HSE1</label>
    </interactant>
    <organismsDiffer>true</organismsDiffer>
    <experiments>2</experiments>
</comment>
<comment type="interaction">
    <interactant intactId="EBI-5333021">
        <id>P0CG53</id>
    </interactant>
    <interactant intactId="EBI-752333">
        <id>Q92783</id>
        <label>STAM</label>
    </interactant>
    <organismsDiffer>true</organismsDiffer>
    <experiments>9</experiments>
</comment>
<comment type="interaction">
    <interactant intactId="EBI-5333021">
        <id>P0CG53</id>
    </interactant>
    <interactant intactId="EBI-20380">
        <id>P40343</id>
        <label>VPS27</label>
    </interactant>
    <organismsDiffer>true</organismsDiffer>
    <experiments>6</experiments>
</comment>
<comment type="subcellular location">
    <molecule>Ubiquitin</molecule>
    <subcellularLocation>
        <location evidence="1">Cytoplasm</location>
    </subcellularLocation>
    <subcellularLocation>
        <location evidence="1">Nucleus</location>
    </subcellularLocation>
    <subcellularLocation>
        <location evidence="2">Mitochondrion outer membrane</location>
        <topology evidence="2">Peripheral membrane protein</topology>
    </subcellularLocation>
</comment>
<comment type="PTM">
    <molecule>Ubiquitin</molecule>
    <text evidence="2 4">Phosphorylated at Ser-65 by PINK1 during mitophagy (PubMed:26116755). Phosphorylated ubiquitin specifically binds and activates parkin (PRKN), triggering mitophagy (PubMed:26116755). Phosphorylation does not affect E1-mediated E2 charging of ubiquitin but affects discharging of E2 enzymes to form polyubiquitin chains (By similarity). It also affects deubiquitination by deubiquitinase enzymes such as USP30 (By similarity).</text>
</comment>
<comment type="PTM">
    <molecule>Ubiquitin</molecule>
    <text evidence="2">Mono-ADP-ribosylated at the C-terminus by PARP9, a component of the PPAR9-DTX3L complex. ADP-ribosylation requires processing by E1 and E2 enzymes and prevents ubiquitin conjugation to substrates such as histones.</text>
</comment>
<comment type="miscellaneous">
    <text>Ubiquitin is encoded by 4 different genes. Uba52 and Rps27a genes code for a single copy of ubiquitin fused to the ribosomal proteins eL40 and eS31, respectively. UBB and UBC genes code for a polyubiquitin precursor with exact head to tail repeats, the number of repeats differ between species and strains.</text>
</comment>
<comment type="miscellaneous">
    <text>For the sake of clarity sequence features are annotated only for the first chain, and are not repeated for each of the following chains.</text>
</comment>
<comment type="similarity">
    <text evidence="5">Belongs to the ubiquitin family.</text>
</comment>
<comment type="sequence caution" evidence="5">
    <conflict type="erroneous initiation">
        <sequence resource="EMBL-CDS" id="BAC56573"/>
    </conflict>
    <text>Extended N-terminus.</text>
</comment>
<comment type="sequence caution" evidence="5">
    <conflict type="miscellaneous discrepancy">
        <sequence resource="EMBL-CDS" id="BAC56573"/>
    </conflict>
    <text>Contaminating sequence. Sequence of unknown origin in the C-terminal part.</text>
</comment>
<reference key="1">
    <citation type="journal article" date="1993" name="Biochim. Biophys. Acta">
        <title>Characterization of a full-length cDNA encoding a bovine four tandem-repeat ubiquitin.</title>
        <authorList>
            <person name="Wempe F."/>
            <person name="Scheit K.H."/>
        </authorList>
    </citation>
    <scope>NUCLEOTIDE SEQUENCE [MRNA]</scope>
    <source>
        <tissue>Seminal vesicle</tissue>
    </source>
</reference>
<reference key="2">
    <citation type="journal article" date="2003" name="Mol. Reprod. Dev.">
        <title>Characterization of gene expression profiles in early bovine pregnancy using a custom cDNA microarray.</title>
        <authorList>
            <person name="Ishiwata H."/>
            <person name="Katsuma S."/>
            <person name="Kizaki K."/>
            <person name="Patel O.V."/>
            <person name="Nakano H."/>
            <person name="Takahashi T."/>
            <person name="Imai K."/>
            <person name="Hirasawa A."/>
            <person name="Shiojima S."/>
            <person name="Ikawa H."/>
            <person name="Suzuki Y."/>
            <person name="Tsujimoto G."/>
            <person name="Izaike Y."/>
            <person name="Todoroki J."/>
            <person name="Hashizume K."/>
        </authorList>
    </citation>
    <scope>NUCLEOTIDE SEQUENCE [MRNA]</scope>
</reference>
<reference key="3">
    <citation type="submission" date="2005-08" db="EMBL/GenBank/DDBJ databases">
        <authorList>
            <consortium name="NIH - Mammalian Gene Collection (MGC) project"/>
        </authorList>
    </citation>
    <scope>NUCLEOTIDE SEQUENCE [LARGE SCALE MRNA]</scope>
    <source>
        <strain>Crossbred X Angus</strain>
        <tissue>Ileum</tissue>
        <tissue>Liver</tissue>
    </source>
</reference>
<reference key="4">
    <citation type="journal article" date="1975" name="Biochemistry">
        <title>The complete amino acid sequence of ubiquitin, an adenylate cyclase stimulating polypeptide probably universal in living cells.</title>
        <authorList>
            <person name="Schlesinger D.H."/>
            <person name="Goldstein G."/>
            <person name="Niall H.D."/>
        </authorList>
    </citation>
    <scope>PROTEIN SEQUENCE OF 1-74</scope>
</reference>
<reference key="5">
    <citation type="journal article" date="1980" name="Biochem. Biophys. Res. Commun.">
        <title>The biosynthesis of ubiquitin by parathyroid gland.</title>
        <authorList>
            <person name="Hamilton J.W."/>
            <person name="Rouse J.B."/>
        </authorList>
    </citation>
    <scope>PROTEIN SEQUENCE OF 1-50</scope>
</reference>
<reference key="6">
    <citation type="journal article" date="1992" name="Eur. J. Biochem.">
        <title>Ganglioside binding proteins of calf brain with ubiquitin-like N-terminals.</title>
        <authorList>
            <person name="Zdebska E."/>
            <person name="Antoniewicz J."/>
            <person name="Nilsson B."/>
            <person name="Sandhoff K."/>
            <person name="Fuerst W."/>
            <person name="Janik P."/>
            <person name="Koscielak J."/>
        </authorList>
    </citation>
    <scope>PROTEIN SEQUENCE OF 1-20</scope>
    <source>
        <tissue>Brain</tissue>
    </source>
</reference>
<reference key="7">
    <citation type="journal article" date="1991" name="Virology">
        <title>Viral cytopathogenicity correlated with integration of ubiquitin-coding sequences.</title>
        <authorList>
            <person name="Meyers G."/>
            <person name="Tautz N."/>
            <person name="Dubovi E.J."/>
            <person name="Thiel H.-J."/>
        </authorList>
    </citation>
    <scope>NUCLEOTIDE SEQUENCE [MRNA] OF 142-305</scope>
    <source>
        <tissue>Kidney</tissue>
    </source>
</reference>
<reference key="8">
    <citation type="journal article" date="2015" name="EMBO Rep.">
        <title>Binding to serine 65-phosphorylated ubiquitin primes Parkin for optimal PINK1-dependent phosphorylation and activation.</title>
        <authorList>
            <person name="Kazlauskaite A."/>
            <person name="Martinez-Torres R.J."/>
            <person name="Wilkie S."/>
            <person name="Kumar A."/>
            <person name="Peltier J."/>
            <person name="Gonzalez A."/>
            <person name="Johnson C."/>
            <person name="Zhang J."/>
            <person name="Hope A.G."/>
            <person name="Peggie M."/>
            <person name="Trost M."/>
            <person name="van Aalten D.M."/>
            <person name="Alessi D.R."/>
            <person name="Prescott A.R."/>
            <person name="Knebel A."/>
            <person name="Walden H."/>
            <person name="Muqit M.M."/>
        </authorList>
    </citation>
    <scope>FUNCTION</scope>
    <scope>PHOSPHORYLATION AT SER-65</scope>
    <scope>MUTAGENESIS OF SER-65</scope>
</reference>
<proteinExistence type="evidence at protein level"/>
<evidence type="ECO:0000250" key="1"/>
<evidence type="ECO:0000250" key="2">
    <source>
        <dbReference type="UniProtKB" id="P0CG47"/>
    </source>
</evidence>
<evidence type="ECO:0000255" key="3">
    <source>
        <dbReference type="PROSITE-ProRule" id="PRU00214"/>
    </source>
</evidence>
<evidence type="ECO:0000269" key="4">
    <source>
    </source>
</evidence>
<evidence type="ECO:0000305" key="5"/>
<evidence type="ECO:0007829" key="6">
    <source>
        <dbReference type="PDB" id="5TR4"/>
    </source>
</evidence>
<gene>
    <name type="primary">UBB</name>
</gene>
<keyword id="KW-0002">3D-structure</keyword>
<keyword id="KW-0013">ADP-ribosylation</keyword>
<keyword id="KW-0963">Cytoplasm</keyword>
<keyword id="KW-0903">Direct protein sequencing</keyword>
<keyword id="KW-1017">Isopeptide bond</keyword>
<keyword id="KW-0472">Membrane</keyword>
<keyword id="KW-0496">Mitochondrion</keyword>
<keyword id="KW-1000">Mitochondrion outer membrane</keyword>
<keyword id="KW-0539">Nucleus</keyword>
<keyword id="KW-0597">Phosphoprotein</keyword>
<keyword id="KW-1185">Reference proteome</keyword>
<keyword id="KW-0677">Repeat</keyword>
<keyword id="KW-0832">Ubl conjugation</keyword>
<organism>
    <name type="scientific">Bos taurus</name>
    <name type="common">Bovine</name>
    <dbReference type="NCBI Taxonomy" id="9913"/>
    <lineage>
        <taxon>Eukaryota</taxon>
        <taxon>Metazoa</taxon>
        <taxon>Chordata</taxon>
        <taxon>Craniata</taxon>
        <taxon>Vertebrata</taxon>
        <taxon>Euteleostomi</taxon>
        <taxon>Mammalia</taxon>
        <taxon>Eutheria</taxon>
        <taxon>Laurasiatheria</taxon>
        <taxon>Artiodactyla</taxon>
        <taxon>Ruminantia</taxon>
        <taxon>Pecora</taxon>
        <taxon>Bovidae</taxon>
        <taxon>Bovinae</taxon>
        <taxon>Bos</taxon>
    </lineage>
</organism>
<accession>P0CG53</accession>
<accession>O97577</accession>
<accession>P02248</accession>
<accession>P02249</accession>
<accession>P02250</accession>
<accession>P62990</accession>
<accession>P80169</accession>
<accession>Q01235</accession>
<accession>Q24K23</accession>
<accession>Q28169</accession>
<accession>Q28170</accession>
<accession>Q29120</accession>
<accession>Q3T0V5</accession>
<accession>Q3ZCE3</accession>
<accession>Q862C1</accession>
<accession>Q862F4</accession>
<accession>Q862M4</accession>
<accession>Q862T5</accession>
<accession>Q862X8</accession>
<accession>Q91887</accession>
<accession>Q91888</accession>
<sequence length="305" mass="34308">MQIFVKTLTGKTITLEVEPSDTIENVKAKIQDKEGIPPDQQRLIFAGKQLEDGRTLSDYNIQKESTLHLVLRLRGGMQIFVKTLTGKTITLEVEPSDTIENVKAKIQDKEGIPPDQQRLIFAGKQLEDGRTLSDYNIQKESTLHLVLRLRGGMQIFVKTLTGKTITLEVEPSDTIENVKAKIQDKEGIPPDQQRLIFAGKQLEDGRTLSDYNIQKESTLHLVLRLRGGMQIFVKTLTGKTITLEVEPSDTIENVKAKIQDKEGIPPDQQRLIFAGKQLEDGRTLSDYNIQKESTLHLVLRLRGGC</sequence>
<name>UBB_BOVIN</name>
<feature type="chain" id="PRO_0000396140" description="Ubiquitin">
    <location>
        <begin position="1"/>
        <end position="76"/>
    </location>
</feature>
<feature type="chain" id="PRO_0000396141" description="Ubiquitin">
    <location>
        <begin position="77"/>
        <end position="152"/>
    </location>
</feature>
<feature type="chain" id="PRO_0000396142" description="Ubiquitin">
    <location>
        <begin position="153"/>
        <end position="228"/>
    </location>
</feature>
<feature type="chain" id="PRO_0000396143" description="Ubiquitin">
    <location>
        <begin position="229"/>
        <end position="304"/>
    </location>
</feature>
<feature type="propeptide" id="PRO_0000396144">
    <location>
        <position position="305"/>
    </location>
</feature>
<feature type="domain" description="Ubiquitin-like 1" evidence="3">
    <location>
        <begin position="1"/>
        <end position="76"/>
    </location>
</feature>
<feature type="domain" description="Ubiquitin-like 2" evidence="3">
    <location>
        <begin position="77"/>
        <end position="152"/>
    </location>
</feature>
<feature type="domain" description="Ubiquitin-like 3" evidence="3">
    <location>
        <begin position="153"/>
        <end position="228"/>
    </location>
</feature>
<feature type="domain" description="Ubiquitin-like 4" evidence="3">
    <location>
        <begin position="229"/>
        <end position="304"/>
    </location>
</feature>
<feature type="site" description="Interacts with activating enzyme">
    <location>
        <position position="54"/>
    </location>
</feature>
<feature type="site" description="Essential for function">
    <location>
        <position position="68"/>
    </location>
</feature>
<feature type="site" description="Interacts with activating enzyme">
    <location>
        <position position="72"/>
    </location>
</feature>
<feature type="modified residue" description="Phosphoserine; by PINK1" evidence="4">
    <location>
        <position position="65"/>
    </location>
</feature>
<feature type="modified residue" description="ADP-ribosylglycine" evidence="2">
    <location>
        <position position="76"/>
    </location>
</feature>
<feature type="modified residue" description="Phosphoserine" evidence="2">
    <location>
        <position position="141"/>
    </location>
</feature>
<feature type="cross-link" description="Glycyl lysine isopeptide (Lys-Gly) (interchain with G-Cter in ubiquitin)" evidence="2">
    <location>
        <position position="6"/>
    </location>
</feature>
<feature type="cross-link" description="Glycyl lysine isopeptide (Lys-Gly) (interchain with G-Cter in ubiquitin)" evidence="2">
    <location>
        <position position="11"/>
    </location>
</feature>
<feature type="cross-link" description="Glycyl lysine isopeptide (Lys-Gly) (interchain with G-Cter in ubiquitin)" evidence="2">
    <location>
        <position position="27"/>
    </location>
</feature>
<feature type="cross-link" description="Glycyl lysine isopeptide (Lys-Gly) (interchain with G-Cter in ubiquitin)" evidence="2">
    <location>
        <position position="29"/>
    </location>
</feature>
<feature type="cross-link" description="Glycyl lysine isopeptide (Lys-Gly) (interchain with G-Cter in ubiquitin)" evidence="2">
    <location>
        <position position="33"/>
    </location>
</feature>
<feature type="cross-link" description="Glycyl lysine isopeptide (Lys-Gly) (interchain with G-Cter in ubiquitin)" evidence="2">
    <location>
        <position position="48"/>
    </location>
</feature>
<feature type="cross-link" description="Glycyl lysine isopeptide (Lys-Gly) (interchain with G-Cter in ubiquitin)" evidence="2">
    <location>
        <position position="63"/>
    </location>
</feature>
<feature type="cross-link" description="Glycyl lysine isopeptide (Gly-Lys) (interchain with K-? in acceptor proteins)" evidence="3">
    <location>
        <position position="76"/>
    </location>
</feature>
<feature type="mutagenesis site" description="Non-phosphorylatable. Reduced phosphorylation of human PRKN by an insect Pink1." evidence="4">
    <original>S</original>
    <variation>A</variation>
    <location>
        <position position="65"/>
    </location>
</feature>
<feature type="sequence conflict" description="In Ref. 1; CAA79146." evidence="5" ref="1">
    <original>S</original>
    <variation>F</variation>
    <location>
        <position position="133"/>
    </location>
</feature>
<feature type="strand" evidence="6">
    <location>
        <begin position="230"/>
        <end position="235"/>
    </location>
</feature>
<feature type="strand" evidence="6">
    <location>
        <begin position="240"/>
        <end position="244"/>
    </location>
</feature>
<feature type="helix" evidence="6">
    <location>
        <begin position="251"/>
        <end position="262"/>
    </location>
</feature>
<feature type="helix" evidence="6">
    <location>
        <begin position="266"/>
        <end position="268"/>
    </location>
</feature>
<feature type="strand" evidence="6">
    <location>
        <begin position="270"/>
        <end position="273"/>
    </location>
</feature>
<feature type="strand" evidence="6">
    <location>
        <begin position="275"/>
        <end position="277"/>
    </location>
</feature>
<feature type="helix" evidence="6">
    <location>
        <begin position="285"/>
        <end position="287"/>
    </location>
</feature>
<feature type="strand" evidence="6">
    <location>
        <begin position="294"/>
        <end position="298"/>
    </location>
</feature>
<dbReference type="EMBL" id="Z18245">
    <property type="protein sequence ID" value="CAA79146.1"/>
    <property type="molecule type" value="mRNA"/>
</dbReference>
<dbReference type="EMBL" id="AB099044">
    <property type="protein sequence ID" value="BAC56534.1"/>
    <property type="molecule type" value="mRNA"/>
</dbReference>
<dbReference type="EMBL" id="AB099083">
    <property type="protein sequence ID" value="BAC56573.1"/>
    <property type="status" value="ALT_SEQ"/>
    <property type="molecule type" value="mRNA"/>
</dbReference>
<dbReference type="EMBL" id="BC114001">
    <property type="protein sequence ID" value="AAI14002.1"/>
    <property type="molecule type" value="mRNA"/>
</dbReference>
<dbReference type="EMBL" id="M62429">
    <property type="protein sequence ID" value="AAA30720.1"/>
    <property type="molecule type" value="mRNA"/>
</dbReference>
<dbReference type="PIR" id="I45964">
    <property type="entry name" value="I45964"/>
</dbReference>
<dbReference type="PIR" id="S29853">
    <property type="entry name" value="S29853"/>
</dbReference>
<dbReference type="RefSeq" id="NP_776558.1">
    <property type="nucleotide sequence ID" value="NM_174133.2"/>
</dbReference>
<dbReference type="RefSeq" id="XP_059733691.1">
    <property type="nucleotide sequence ID" value="XM_059877708.1"/>
</dbReference>
<dbReference type="RefSeq" id="XP_059733692.1">
    <property type="nucleotide sequence ID" value="XM_059877709.1"/>
</dbReference>
<dbReference type="PDB" id="5TR4">
    <property type="method" value="X-ray"/>
    <property type="resolution" value="2.20 A"/>
    <property type="chains" value="B/D=1-76"/>
</dbReference>
<dbReference type="PDBsum" id="5TR4"/>
<dbReference type="SMR" id="P0CG53"/>
<dbReference type="BioGRID" id="158705">
    <property type="interactions" value="3"/>
</dbReference>
<dbReference type="FunCoup" id="P0CG53">
    <property type="interactions" value="680"/>
</dbReference>
<dbReference type="IntAct" id="P0CG53">
    <property type="interactions" value="10"/>
</dbReference>
<dbReference type="MINT" id="P0CG53"/>
<dbReference type="STRING" id="9913.ENSBTAP00000022919"/>
<dbReference type="iPTMnet" id="P0CG53"/>
<dbReference type="PaxDb" id="9913-ENSBTAP00000022919"/>
<dbReference type="PeptideAtlas" id="P0CG53"/>
<dbReference type="Ensembl" id="ENSBTAT00000022919.4">
    <property type="protein sequence ID" value="ENSBTAP00000022919.2"/>
    <property type="gene ID" value="ENSBTAG00000017246.6"/>
</dbReference>
<dbReference type="Ensembl" id="ENSBTAT00000094075.1">
    <property type="protein sequence ID" value="ENSBTAP00000102596.1"/>
    <property type="gene ID" value="ENSBTAG00000017246.6"/>
</dbReference>
<dbReference type="Ensembl" id="ENSBTAT00000102680.1">
    <property type="protein sequence ID" value="ENSBTAP00000099680.1"/>
    <property type="gene ID" value="ENSBTAG00000017246.6"/>
</dbReference>
<dbReference type="GeneID" id="281370"/>
<dbReference type="KEGG" id="bta:281370"/>
<dbReference type="CTD" id="7314"/>
<dbReference type="VEuPathDB" id="HostDB:ENSBTAG00000017246"/>
<dbReference type="VGNC" id="VGNC:107281">
    <property type="gene designation" value="UBB"/>
</dbReference>
<dbReference type="eggNOG" id="KOG0001">
    <property type="taxonomic scope" value="Eukaryota"/>
</dbReference>
<dbReference type="GeneTree" id="ENSGT00940000162439"/>
<dbReference type="HOGENOM" id="CLU_010412_7_0_1"/>
<dbReference type="InParanoid" id="P0CG53"/>
<dbReference type="OMA" id="VHENTRR"/>
<dbReference type="OrthoDB" id="428577at2759"/>
<dbReference type="TreeFam" id="TF300820"/>
<dbReference type="Reactome" id="R-BTA-110312">
    <property type="pathway name" value="Translesion synthesis by REV1"/>
</dbReference>
<dbReference type="Reactome" id="R-BTA-110314">
    <property type="pathway name" value="Recognition of DNA damage by PCNA-containing replication complex"/>
</dbReference>
<dbReference type="Reactome" id="R-BTA-110320">
    <property type="pathway name" value="Translesion Synthesis by POLH"/>
</dbReference>
<dbReference type="Reactome" id="R-BTA-1169091">
    <property type="pathway name" value="Activation of NF-kappaB in B cells"/>
</dbReference>
<dbReference type="Reactome" id="R-BTA-1234176">
    <property type="pathway name" value="Oxygen-dependent proline hydroxylation of Hypoxia-inducible Factor Alpha"/>
</dbReference>
<dbReference type="Reactome" id="R-BTA-1253288">
    <property type="pathway name" value="Downregulation of ERBB4 signaling"/>
</dbReference>
<dbReference type="Reactome" id="R-BTA-1295596">
    <property type="pathway name" value="Spry regulation of FGF signaling"/>
</dbReference>
<dbReference type="Reactome" id="R-BTA-1358803">
    <property type="pathway name" value="Downregulation of ERBB2:ERBB3 signaling"/>
</dbReference>
<dbReference type="Reactome" id="R-BTA-168638">
    <property type="pathway name" value="NOD1/2 Signaling Pathway"/>
</dbReference>
<dbReference type="Reactome" id="R-BTA-174048">
    <property type="pathway name" value="APC/C:Cdc20 mediated degradation of Cyclin B"/>
</dbReference>
<dbReference type="Reactome" id="R-BTA-174084">
    <property type="pathway name" value="Autodegradation of Cdh1 by Cdh1:APC/C"/>
</dbReference>
<dbReference type="Reactome" id="R-BTA-174113">
    <property type="pathway name" value="SCF-beta-TrCP mediated degradation of Emi1"/>
</dbReference>
<dbReference type="Reactome" id="R-BTA-174154">
    <property type="pathway name" value="APC/C:Cdc20 mediated degradation of Securin"/>
</dbReference>
<dbReference type="Reactome" id="R-BTA-174178">
    <property type="pathway name" value="APC/C:Cdh1 mediated degradation of Cdc20 and other APC/C:Cdh1 targeted proteins in late mitosis/early G1"/>
</dbReference>
<dbReference type="Reactome" id="R-BTA-174184">
    <property type="pathway name" value="Cdc20:Phospho-APC/C mediated degradation of Cyclin A"/>
</dbReference>
<dbReference type="Reactome" id="R-BTA-179409">
    <property type="pathway name" value="APC-Cdc20 mediated degradation of Nek2A"/>
</dbReference>
<dbReference type="Reactome" id="R-BTA-182971">
    <property type="pathway name" value="EGFR downregulation"/>
</dbReference>
<dbReference type="Reactome" id="R-BTA-187577">
    <property type="pathway name" value="SCF(Skp2)-mediated degradation of p27/p21"/>
</dbReference>
<dbReference type="Reactome" id="R-BTA-195253">
    <property type="pathway name" value="Degradation of beta-catenin by the destruction complex"/>
</dbReference>
<dbReference type="Reactome" id="R-BTA-201681">
    <property type="pathway name" value="TCF dependent signaling in response to WNT"/>
</dbReference>
<dbReference type="Reactome" id="R-BTA-202424">
    <property type="pathway name" value="Downstream TCR signaling"/>
</dbReference>
<dbReference type="Reactome" id="R-BTA-205043">
    <property type="pathway name" value="NRIF signals cell death from the nucleus"/>
</dbReference>
<dbReference type="Reactome" id="R-BTA-209543">
    <property type="pathway name" value="p75NTR recruits signalling complexes"/>
</dbReference>
<dbReference type="Reactome" id="R-BTA-209560">
    <property type="pathway name" value="NF-kB is activated and signals survival"/>
</dbReference>
<dbReference type="Reactome" id="R-BTA-2122948">
    <property type="pathway name" value="Activated NOTCH1 Transmits Signal to the Nucleus"/>
</dbReference>
<dbReference type="Reactome" id="R-BTA-2173788">
    <property type="pathway name" value="Downregulation of TGF-beta receptor signaling"/>
</dbReference>
<dbReference type="Reactome" id="R-BTA-2173791">
    <property type="pathway name" value="TGF-beta receptor signaling in EMT (epithelial to mesenchymal transition)"/>
</dbReference>
<dbReference type="Reactome" id="R-BTA-2173795">
    <property type="pathway name" value="Downregulation of SMAD2/3:SMAD4 transcriptional activity"/>
</dbReference>
<dbReference type="Reactome" id="R-BTA-2173796">
    <property type="pathway name" value="SMAD2/SMAD3:SMAD4 heterotrimer regulates transcription"/>
</dbReference>
<dbReference type="Reactome" id="R-BTA-2467813">
    <property type="pathway name" value="Separation of Sister Chromatids"/>
</dbReference>
<dbReference type="Reactome" id="R-BTA-2559582">
    <property type="pathway name" value="Senescence-Associated Secretory Phenotype (SASP)"/>
</dbReference>
<dbReference type="Reactome" id="R-BTA-2565942">
    <property type="pathway name" value="Regulation of PLK1 Activity at G2/M Transition"/>
</dbReference>
<dbReference type="Reactome" id="R-BTA-2871837">
    <property type="pathway name" value="FCERI mediated NF-kB activation"/>
</dbReference>
<dbReference type="Reactome" id="R-BTA-3134975">
    <property type="pathway name" value="Regulation of innate immune responses to cytosolic DNA"/>
</dbReference>
<dbReference type="Reactome" id="R-BTA-349425">
    <property type="pathway name" value="Autodegradation of the E3 ubiquitin ligase COP1"/>
</dbReference>
<dbReference type="Reactome" id="R-BTA-3769402">
    <property type="pathway name" value="Deactivation of the beta-catenin transactivating complex"/>
</dbReference>
<dbReference type="Reactome" id="R-BTA-382556">
    <property type="pathway name" value="ABC-family proteins mediated transport"/>
</dbReference>
<dbReference type="Reactome" id="R-BTA-450302">
    <property type="pathway name" value="activated TAK1 mediates p38 MAPK activation"/>
</dbReference>
<dbReference type="Reactome" id="R-BTA-450321">
    <property type="pathway name" value="JNK (c-Jun kinases) phosphorylation and activation mediated by activated human TAK1"/>
</dbReference>
<dbReference type="Reactome" id="R-BTA-450408">
    <property type="pathway name" value="AUF1 (hnRNP D0) binds and destabilizes mRNA"/>
</dbReference>
<dbReference type="Reactome" id="R-BTA-4608870">
    <property type="pathway name" value="Asymmetric localization of PCP proteins"/>
</dbReference>
<dbReference type="Reactome" id="R-BTA-4641257">
    <property type="pathway name" value="Degradation of AXIN"/>
</dbReference>
<dbReference type="Reactome" id="R-BTA-4641258">
    <property type="pathway name" value="Degradation of DVL"/>
</dbReference>
<dbReference type="Reactome" id="R-BTA-4641263">
    <property type="pathway name" value="Regulation of FZD by ubiquitination"/>
</dbReference>
<dbReference type="Reactome" id="R-BTA-532668">
    <property type="pathway name" value="N-glycan trimming in the ER and Calnexin/Calreticulin cycle"/>
</dbReference>
<dbReference type="Reactome" id="R-BTA-5357905">
    <property type="pathway name" value="Regulation of TNFR1 signaling"/>
</dbReference>
<dbReference type="Reactome" id="R-BTA-5357956">
    <property type="pathway name" value="TNFR1-induced NF-kappa-B signaling pathway"/>
</dbReference>
<dbReference type="Reactome" id="R-BTA-5358346">
    <property type="pathway name" value="Hedgehog ligand biogenesis"/>
</dbReference>
<dbReference type="Reactome" id="R-BTA-5607761">
    <property type="pathway name" value="Dectin-1 mediated noncanonical NF-kB signaling"/>
</dbReference>
<dbReference type="Reactome" id="R-BTA-5607764">
    <property type="pathway name" value="CLEC7A (Dectin-1) signaling"/>
</dbReference>
<dbReference type="Reactome" id="R-BTA-5610780">
    <property type="pathway name" value="Degradation of GLI1 by the proteasome"/>
</dbReference>
<dbReference type="Reactome" id="R-BTA-5610785">
    <property type="pathway name" value="GLI3 is processed to GLI3R by the proteasome"/>
</dbReference>
<dbReference type="Reactome" id="R-BTA-5632684">
    <property type="pathway name" value="Hedgehog 'on' state"/>
</dbReference>
<dbReference type="Reactome" id="R-BTA-5654726">
    <property type="pathway name" value="Negative regulation of FGFR1 signaling"/>
</dbReference>
<dbReference type="Reactome" id="R-BTA-5654727">
    <property type="pathway name" value="Negative regulation of FGFR2 signaling"/>
</dbReference>
<dbReference type="Reactome" id="R-BTA-5654732">
    <property type="pathway name" value="Negative regulation of FGFR3 signaling"/>
</dbReference>
<dbReference type="Reactome" id="R-BTA-5654733">
    <property type="pathway name" value="Negative regulation of FGFR4 signaling"/>
</dbReference>
<dbReference type="Reactome" id="R-BTA-5655862">
    <property type="pathway name" value="Translesion synthesis by POLK"/>
</dbReference>
<dbReference type="Reactome" id="R-BTA-5656121">
    <property type="pathway name" value="Translesion synthesis by POLI"/>
</dbReference>
<dbReference type="Reactome" id="R-BTA-5656169">
    <property type="pathway name" value="Termination of translesion DNA synthesis"/>
</dbReference>
<dbReference type="Reactome" id="R-BTA-5668541">
    <property type="pathway name" value="TNFR2 non-canonical NF-kB pathway"/>
</dbReference>
<dbReference type="Reactome" id="R-BTA-5675221">
    <property type="pathway name" value="Negative regulation of MAPK pathway"/>
</dbReference>
<dbReference type="Reactome" id="R-BTA-5675482">
    <property type="pathway name" value="Regulation of necroptotic cell death"/>
</dbReference>
<dbReference type="Reactome" id="R-BTA-5676590">
    <property type="pathway name" value="NIK--&gt;noncanonical NF-kB signaling"/>
</dbReference>
<dbReference type="Reactome" id="R-BTA-5684264">
    <property type="pathway name" value="MAP3K8 (TPL2)-dependent MAPK1/3 activation"/>
</dbReference>
<dbReference type="Reactome" id="R-BTA-5685942">
    <property type="pathway name" value="HDR through Homologous Recombination (HRR)"/>
</dbReference>
<dbReference type="Reactome" id="R-BTA-5687128">
    <property type="pathway name" value="MAPK6/MAPK4 signaling"/>
</dbReference>
<dbReference type="Reactome" id="R-BTA-5689603">
    <property type="pathway name" value="UCH proteinases"/>
</dbReference>
<dbReference type="Reactome" id="R-BTA-5689877">
    <property type="pathway name" value="Josephin domain DUBs"/>
</dbReference>
<dbReference type="Reactome" id="R-BTA-5689880">
    <property type="pathway name" value="Ub-specific processing proteases"/>
</dbReference>
<dbReference type="Reactome" id="R-BTA-5689896">
    <property type="pathway name" value="Ovarian tumor domain proteases"/>
</dbReference>
<dbReference type="Reactome" id="R-BTA-5689901">
    <property type="pathway name" value="Metalloprotease DUBs"/>
</dbReference>
<dbReference type="Reactome" id="R-BTA-5693565">
    <property type="pathway name" value="Recruitment and ATM-mediated phosphorylation of repair and signaling proteins at DNA double strand breaks"/>
</dbReference>
<dbReference type="Reactome" id="R-BTA-5693607">
    <property type="pathway name" value="Processing of DNA double-strand break ends"/>
</dbReference>
<dbReference type="Reactome" id="R-BTA-5696394">
    <property type="pathway name" value="DNA Damage Recognition in GG-NER"/>
</dbReference>
<dbReference type="Reactome" id="R-BTA-5696395">
    <property type="pathway name" value="Formation of Incision Complex in GG-NER"/>
</dbReference>
<dbReference type="Reactome" id="R-BTA-5696397">
    <property type="pathway name" value="Gap-filling DNA repair synthesis and ligation in GG-NER"/>
</dbReference>
<dbReference type="Reactome" id="R-BTA-5696400">
    <property type="pathway name" value="Dual Incision in GG-NER"/>
</dbReference>
<dbReference type="Reactome" id="R-BTA-6781823">
    <property type="pathway name" value="Formation of TC-NER Pre-Incision Complex"/>
</dbReference>
<dbReference type="Reactome" id="R-BTA-6782135">
    <property type="pathway name" value="Dual incision in TC-NER"/>
</dbReference>
<dbReference type="Reactome" id="R-BTA-6782210">
    <property type="pathway name" value="Gap-filling DNA repair synthesis and ligation in TC-NER"/>
</dbReference>
<dbReference type="Reactome" id="R-BTA-6783310">
    <property type="pathway name" value="Fanconi Anemia Pathway"/>
</dbReference>
<dbReference type="Reactome" id="R-BTA-6804756">
    <property type="pathway name" value="Regulation of TP53 Activity through Phosphorylation"/>
</dbReference>
<dbReference type="Reactome" id="R-BTA-6804757">
    <property type="pathway name" value="Regulation of TP53 Degradation"/>
</dbReference>
<dbReference type="Reactome" id="R-BTA-6804760">
    <property type="pathway name" value="Regulation of TP53 Activity through Methylation"/>
</dbReference>
<dbReference type="Reactome" id="R-BTA-6807004">
    <property type="pathway name" value="Negative regulation of MET activity"/>
</dbReference>
<dbReference type="Reactome" id="R-BTA-68867">
    <property type="pathway name" value="Assembly of the pre-replicative complex"/>
</dbReference>
<dbReference type="Reactome" id="R-BTA-68949">
    <property type="pathway name" value="Orc1 removal from chromatin"/>
</dbReference>
<dbReference type="Reactome" id="R-BTA-69017">
    <property type="pathway name" value="CDK-mediated phosphorylation and removal of Cdc6"/>
</dbReference>
<dbReference type="Reactome" id="R-BTA-69231">
    <property type="pathway name" value="Cyclin D associated events in G1"/>
</dbReference>
<dbReference type="Reactome" id="R-BTA-69481">
    <property type="pathway name" value="G2/M Checkpoints"/>
</dbReference>
<dbReference type="Reactome" id="R-BTA-69601">
    <property type="pathway name" value="Ubiquitin Mediated Degradation of Phosphorylated Cdc25A"/>
</dbReference>
<dbReference type="Reactome" id="R-BTA-75815">
    <property type="pathway name" value="Ubiquitin-dependent degradation of Cyclin D"/>
</dbReference>
<dbReference type="Reactome" id="R-BTA-8849469">
    <property type="pathway name" value="PTK6 Regulates RTKs and Their Effectors AKT1 and DOK1"/>
</dbReference>
<dbReference type="Reactome" id="R-BTA-8852276">
    <property type="pathway name" value="The role of GTSE1 in G2/M progression after G2 checkpoint"/>
</dbReference>
<dbReference type="Reactome" id="R-BTA-8854050">
    <property type="pathway name" value="FBXL7 down-regulates AURKA during mitotic entry and in early mitosis"/>
</dbReference>
<dbReference type="Reactome" id="R-BTA-8856825">
    <property type="pathway name" value="Cargo recognition for clathrin-mediated endocytosis"/>
</dbReference>
<dbReference type="Reactome" id="R-BTA-8856828">
    <property type="pathway name" value="Clathrin-mediated endocytosis"/>
</dbReference>
<dbReference type="Reactome" id="R-BTA-8863795">
    <property type="pathway name" value="Downregulation of ERBB2 signaling"/>
</dbReference>
<dbReference type="Reactome" id="R-BTA-8866427">
    <property type="pathway name" value="VLDLR internalisation and degradation"/>
</dbReference>
<dbReference type="Reactome" id="R-BTA-8866652">
    <property type="pathway name" value="Synthesis of active ubiquitin: roles of E1 and E2 enzymes"/>
</dbReference>
<dbReference type="Reactome" id="R-BTA-8866654">
    <property type="pathway name" value="E3 ubiquitin ligases ubiquitinate target proteins"/>
</dbReference>
<dbReference type="Reactome" id="R-BTA-8939236">
    <property type="pathway name" value="RUNX1 regulates transcription of genes involved in differentiation of HSCs"/>
</dbReference>
<dbReference type="Reactome" id="R-BTA-8939902">
    <property type="pathway name" value="Regulation of RUNX2 expression and activity"/>
</dbReference>
<dbReference type="Reactome" id="R-BTA-8941858">
    <property type="pathway name" value="Regulation of RUNX3 expression and activity"/>
</dbReference>
<dbReference type="Reactome" id="R-BTA-8948747">
    <property type="pathway name" value="Regulation of PTEN localization"/>
</dbReference>
<dbReference type="Reactome" id="R-BTA-8948751">
    <property type="pathway name" value="Regulation of PTEN stability and activity"/>
</dbReference>
<dbReference type="Reactome" id="R-BTA-8951664">
    <property type="pathway name" value="Neddylation"/>
</dbReference>
<dbReference type="Reactome" id="R-BTA-901032">
    <property type="pathway name" value="ER Quality Control Compartment (ERQC)"/>
</dbReference>
<dbReference type="Reactome" id="R-BTA-9010553">
    <property type="pathway name" value="Regulation of expression of SLITs and ROBOs"/>
</dbReference>
<dbReference type="Reactome" id="R-BTA-9020702">
    <property type="pathway name" value="Interleukin-1 signaling"/>
</dbReference>
<dbReference type="Reactome" id="R-BTA-9033241">
    <property type="pathway name" value="Peroxisomal protein import"/>
</dbReference>
<dbReference type="Reactome" id="R-BTA-909733">
    <property type="pathway name" value="Interferon alpha/beta signaling"/>
</dbReference>
<dbReference type="Reactome" id="R-BTA-912631">
    <property type="pathway name" value="Regulation of signaling by CBL"/>
</dbReference>
<dbReference type="Reactome" id="R-BTA-917729">
    <property type="pathway name" value="Endosomal Sorting Complex Required For Transport (ESCRT)"/>
</dbReference>
<dbReference type="Reactome" id="R-BTA-917937">
    <property type="pathway name" value="Iron uptake and transport"/>
</dbReference>
<dbReference type="Reactome" id="R-BTA-936440">
    <property type="pathway name" value="Negative regulators of DDX58/IFIH1 signaling"/>
</dbReference>
<dbReference type="Reactome" id="R-BTA-936964">
    <property type="pathway name" value="Activation of IRF3, IRF7 mediated by TBK1, IKKEpsilon (IKBKE)"/>
</dbReference>
<dbReference type="Reactome" id="R-BTA-937041">
    <property type="pathway name" value="IKK complex recruitment mediated by RIP1"/>
</dbReference>
<dbReference type="Reactome" id="R-BTA-937042">
    <property type="pathway name" value="IRAK2 mediated activation of TAK1 complex"/>
</dbReference>
<dbReference type="Reactome" id="R-BTA-937072">
    <property type="pathway name" value="TRAF6-mediated induction of TAK1 complex within TLR4 complex"/>
</dbReference>
<dbReference type="Reactome" id="R-BTA-9645460">
    <property type="pathway name" value="Alpha-protein kinase 1 signaling pathway"/>
</dbReference>
<dbReference type="Reactome" id="R-BTA-9646399">
    <property type="pathway name" value="Aggrephagy"/>
</dbReference>
<dbReference type="Reactome" id="R-BTA-9648002">
    <property type="pathway name" value="RAS processing"/>
</dbReference>
<dbReference type="Reactome" id="R-BTA-9664873">
    <property type="pathway name" value="Pexophagy"/>
</dbReference>
<dbReference type="Reactome" id="R-BTA-9705462">
    <property type="pathway name" value="Inactivation of CSF3 (G-CSF) signaling"/>
</dbReference>
<dbReference type="Reactome" id="R-BTA-9706369">
    <property type="pathway name" value="Negative regulation of FLT3"/>
</dbReference>
<dbReference type="Reactome" id="R-BTA-9708530">
    <property type="pathway name" value="Regulation of BACH1 activity"/>
</dbReference>
<dbReference type="Reactome" id="R-BTA-975163">
    <property type="pathway name" value="IRAK2 mediated activation of TAK1 complex upon TLR7/8 or 9 stimulation"/>
</dbReference>
<dbReference type="Reactome" id="R-BTA-9755511">
    <property type="pathway name" value="KEAP1-NFE2L2 pathway"/>
</dbReference>
<dbReference type="Reactome" id="R-BTA-9758274">
    <property type="pathway name" value="Regulation of NF-kappa B signaling"/>
</dbReference>
<dbReference type="Reactome" id="R-BTA-9762114">
    <property type="pathway name" value="GSK3B and BTRC:CUL1-mediated-degradation of NFE2L2"/>
</dbReference>
<dbReference type="Reactome" id="R-BTA-9824878">
    <property type="pathway name" value="Regulation of TBK1, IKKEpsilon (IKBKE)-mediated activation of IRF3, IRF7"/>
</dbReference>
<dbReference type="Reactome" id="R-BTA-983168">
    <property type="pathway name" value="Antigen processing: Ubiquitination &amp; Proteasome degradation"/>
</dbReference>
<dbReference type="Reactome" id="R-BTA-9861718">
    <property type="pathway name" value="Regulation of pyruvate metabolism"/>
</dbReference>
<dbReference type="CD-CODE" id="D7FE2080">
    <property type="entry name" value="Nucleolus"/>
</dbReference>
<dbReference type="EvolutionaryTrace" id="P0CG53"/>
<dbReference type="Proteomes" id="UP000009136">
    <property type="component" value="Chromosome 19"/>
</dbReference>
<dbReference type="Bgee" id="ENSBTAG00000017246">
    <property type="expression patterns" value="Expressed in oocyte and 108 other cell types or tissues"/>
</dbReference>
<dbReference type="GO" id="GO:0005737">
    <property type="term" value="C:cytoplasm"/>
    <property type="evidence" value="ECO:0000318"/>
    <property type="project" value="GO_Central"/>
</dbReference>
<dbReference type="GO" id="GO:0005741">
    <property type="term" value="C:mitochondrial outer membrane"/>
    <property type="evidence" value="ECO:0007669"/>
    <property type="project" value="UniProtKB-SubCell"/>
</dbReference>
<dbReference type="GO" id="GO:0043005">
    <property type="term" value="C:neuron projection"/>
    <property type="evidence" value="ECO:0007669"/>
    <property type="project" value="Ensembl"/>
</dbReference>
<dbReference type="GO" id="GO:0043025">
    <property type="term" value="C:neuronal cell body"/>
    <property type="evidence" value="ECO:0007669"/>
    <property type="project" value="Ensembl"/>
</dbReference>
<dbReference type="GO" id="GO:0005634">
    <property type="term" value="C:nucleus"/>
    <property type="evidence" value="ECO:0000318"/>
    <property type="project" value="GO_Central"/>
</dbReference>
<dbReference type="GO" id="GO:0031386">
    <property type="term" value="F:protein tag activity"/>
    <property type="evidence" value="ECO:0000318"/>
    <property type="project" value="GO_Central"/>
</dbReference>
<dbReference type="GO" id="GO:0003735">
    <property type="term" value="F:structural constituent of ribosome"/>
    <property type="evidence" value="ECO:0000318"/>
    <property type="project" value="GO_Central"/>
</dbReference>
<dbReference type="GO" id="GO:0031625">
    <property type="term" value="F:ubiquitin protein ligase binding"/>
    <property type="evidence" value="ECO:0000318"/>
    <property type="project" value="GO_Central"/>
</dbReference>
<dbReference type="GO" id="GO:0097009">
    <property type="term" value="P:energy homeostasis"/>
    <property type="evidence" value="ECO:0007669"/>
    <property type="project" value="Ensembl"/>
</dbReference>
<dbReference type="GO" id="GO:0060613">
    <property type="term" value="P:fat pad development"/>
    <property type="evidence" value="ECO:0007669"/>
    <property type="project" value="Ensembl"/>
</dbReference>
<dbReference type="GO" id="GO:0008585">
    <property type="term" value="P:female gonad development"/>
    <property type="evidence" value="ECO:0007669"/>
    <property type="project" value="Ensembl"/>
</dbReference>
<dbReference type="GO" id="GO:0007144">
    <property type="term" value="P:female meiosis I"/>
    <property type="evidence" value="ECO:0007669"/>
    <property type="project" value="Ensembl"/>
</dbReference>
<dbReference type="GO" id="GO:0021888">
    <property type="term" value="P:hypothalamus gonadotrophin-releasing hormone neuron development"/>
    <property type="evidence" value="ECO:0007669"/>
    <property type="project" value="Ensembl"/>
</dbReference>
<dbReference type="GO" id="GO:0007141">
    <property type="term" value="P:male meiosis I"/>
    <property type="evidence" value="ECO:0007669"/>
    <property type="project" value="Ensembl"/>
</dbReference>
<dbReference type="GO" id="GO:0047497">
    <property type="term" value="P:mitochondrion transport along microtubule"/>
    <property type="evidence" value="ECO:0007669"/>
    <property type="project" value="Ensembl"/>
</dbReference>
<dbReference type="GO" id="GO:0019941">
    <property type="term" value="P:modification-dependent protein catabolic process"/>
    <property type="evidence" value="ECO:0000318"/>
    <property type="project" value="GO_Central"/>
</dbReference>
<dbReference type="GO" id="GO:0048812">
    <property type="term" value="P:neuron projection morphogenesis"/>
    <property type="evidence" value="ECO:0007669"/>
    <property type="project" value="Ensembl"/>
</dbReference>
<dbReference type="GO" id="GO:1902255">
    <property type="term" value="P:positive regulation of intrinsic apoptotic signaling pathway by p53 class mediator"/>
    <property type="evidence" value="ECO:0007669"/>
    <property type="project" value="Ensembl"/>
</dbReference>
<dbReference type="GO" id="GO:1902527">
    <property type="term" value="P:positive regulation of protein monoubiquitination"/>
    <property type="evidence" value="ECO:0007669"/>
    <property type="project" value="Ensembl"/>
</dbReference>
<dbReference type="GO" id="GO:0016567">
    <property type="term" value="P:protein ubiquitination"/>
    <property type="evidence" value="ECO:0000318"/>
    <property type="project" value="GO_Central"/>
</dbReference>
<dbReference type="GO" id="GO:0051881">
    <property type="term" value="P:regulation of mitochondrial membrane potential"/>
    <property type="evidence" value="ECO:0007669"/>
    <property type="project" value="Ensembl"/>
</dbReference>
<dbReference type="GO" id="GO:0043523">
    <property type="term" value="P:regulation of neuron apoptotic process"/>
    <property type="evidence" value="ECO:0007669"/>
    <property type="project" value="Ensembl"/>
</dbReference>
<dbReference type="GO" id="GO:0061136">
    <property type="term" value="P:regulation of proteasomal protein catabolic process"/>
    <property type="evidence" value="ECO:0007669"/>
    <property type="project" value="Ensembl"/>
</dbReference>
<dbReference type="GO" id="GO:0072520">
    <property type="term" value="P:seminiferous tubule development"/>
    <property type="evidence" value="ECO:0007669"/>
    <property type="project" value="Ensembl"/>
</dbReference>
<dbReference type="CDD" id="cd01803">
    <property type="entry name" value="Ubl_ubiquitin"/>
    <property type="match status" value="4"/>
</dbReference>
<dbReference type="FunFam" id="3.10.20.90:FF:000158">
    <property type="entry name" value="Polyubiquitin 5"/>
    <property type="match status" value="4"/>
</dbReference>
<dbReference type="Gene3D" id="3.10.20.90">
    <property type="entry name" value="Phosphatidylinositol 3-kinase Catalytic Subunit, Chain A, domain 1"/>
    <property type="match status" value="4"/>
</dbReference>
<dbReference type="InterPro" id="IPR000626">
    <property type="entry name" value="Ubiquitin-like_dom"/>
</dbReference>
<dbReference type="InterPro" id="IPR029071">
    <property type="entry name" value="Ubiquitin-like_domsf"/>
</dbReference>
<dbReference type="InterPro" id="IPR019954">
    <property type="entry name" value="Ubiquitin_CS"/>
</dbReference>
<dbReference type="InterPro" id="IPR019956">
    <property type="entry name" value="Ubiquitin_dom"/>
</dbReference>
<dbReference type="InterPro" id="IPR050158">
    <property type="entry name" value="Ubiquitin_ubiquitin-like"/>
</dbReference>
<dbReference type="PANTHER" id="PTHR10666">
    <property type="entry name" value="UBIQUITIN"/>
    <property type="match status" value="1"/>
</dbReference>
<dbReference type="Pfam" id="PF00240">
    <property type="entry name" value="ubiquitin"/>
    <property type="match status" value="4"/>
</dbReference>
<dbReference type="PRINTS" id="PR00348">
    <property type="entry name" value="UBIQUITIN"/>
</dbReference>
<dbReference type="SMART" id="SM00213">
    <property type="entry name" value="UBQ"/>
    <property type="match status" value="4"/>
</dbReference>
<dbReference type="SUPFAM" id="SSF54236">
    <property type="entry name" value="Ubiquitin-like"/>
    <property type="match status" value="4"/>
</dbReference>
<dbReference type="PROSITE" id="PS00299">
    <property type="entry name" value="UBIQUITIN_1"/>
    <property type="match status" value="4"/>
</dbReference>
<dbReference type="PROSITE" id="PS50053">
    <property type="entry name" value="UBIQUITIN_2"/>
    <property type="match status" value="4"/>
</dbReference>
<protein>
    <recommendedName>
        <fullName>Polyubiquitin-B</fullName>
    </recommendedName>
    <component>
        <recommendedName>
            <fullName>Ubiquitin</fullName>
        </recommendedName>
    </component>
</protein>